<protein>
    <recommendedName>
        <fullName evidence="1">Cytochrome b6-f complex iron-sulfur subunit</fullName>
        <ecNumber evidence="1">7.1.1.6</ecNumber>
    </recommendedName>
    <alternativeName>
        <fullName evidence="1">Plastohydroquinone:plastocyanin oxidoreductase iron-sulfur protein</fullName>
        <shortName evidence="1">ISP</shortName>
        <shortName evidence="1">RISP</shortName>
    </alternativeName>
    <alternativeName>
        <fullName evidence="1">Rieske iron-sulfur protein</fullName>
    </alternativeName>
</protein>
<sequence length="180" mass="19316">MAQVSGMSDVPDMGRRQFMNLLTFGTITGTALGALYPVVKYFIPPASGGTGGGAVAKDALGNDIKVSEYLAKHLPGDRSLAQGIKGDPTYVIVTEDHQIANYGLNAVCTHLGCVVPWNVSENKFICPCHGSQYDSTGKVVRGPAPLSLALVKATVTEDDKLVFTPWTEIDFRTGKEPWWT</sequence>
<name>UCRI_THEVB</name>
<accession>P0C8N8</accession>
<accession>Q79V50</accession>
<accession>Q9X9T2</accession>
<reference key="1">
    <citation type="journal article" date="2002" name="DNA Res.">
        <title>Complete genome structure of the thermophilic cyanobacterium Thermosynechococcus elongatus BP-1.</title>
        <authorList>
            <person name="Nakamura Y."/>
            <person name="Kaneko T."/>
            <person name="Sato S."/>
            <person name="Ikeuchi M."/>
            <person name="Katoh H."/>
            <person name="Sasamoto S."/>
            <person name="Watanabe A."/>
            <person name="Iriguchi M."/>
            <person name="Kawashima K."/>
            <person name="Kimura T."/>
            <person name="Kishida Y."/>
            <person name="Kiyokawa C."/>
            <person name="Kohara M."/>
            <person name="Matsumoto M."/>
            <person name="Matsuno A."/>
            <person name="Nakazaki N."/>
            <person name="Shimpo S."/>
            <person name="Sugimoto M."/>
            <person name="Takeuchi C."/>
            <person name="Yamada M."/>
            <person name="Tabata S."/>
        </authorList>
    </citation>
    <scope>NUCLEOTIDE SEQUENCE [LARGE SCALE GENOMIC DNA]</scope>
    <source>
        <strain>NIES-2133 / IAM M-273 / BP-1</strain>
    </source>
</reference>
<organism>
    <name type="scientific">Thermosynechococcus vestitus (strain NIES-2133 / IAM M-273 / BP-1)</name>
    <dbReference type="NCBI Taxonomy" id="197221"/>
    <lineage>
        <taxon>Bacteria</taxon>
        <taxon>Bacillati</taxon>
        <taxon>Cyanobacteriota</taxon>
        <taxon>Cyanophyceae</taxon>
        <taxon>Acaryochloridales</taxon>
        <taxon>Thermosynechococcaceae</taxon>
        <taxon>Thermosynechococcus</taxon>
    </lineage>
</organism>
<proteinExistence type="evidence at protein level"/>
<keyword id="KW-0001">2Fe-2S</keyword>
<keyword id="KW-0002">3D-structure</keyword>
<keyword id="KW-1015">Disulfide bond</keyword>
<keyword id="KW-0249">Electron transport</keyword>
<keyword id="KW-0408">Iron</keyword>
<keyword id="KW-0411">Iron-sulfur</keyword>
<keyword id="KW-0472">Membrane</keyword>
<keyword id="KW-0479">Metal-binding</keyword>
<keyword id="KW-1185">Reference proteome</keyword>
<keyword id="KW-0793">Thylakoid</keyword>
<keyword id="KW-1278">Translocase</keyword>
<keyword id="KW-0812">Transmembrane</keyword>
<keyword id="KW-1133">Transmembrane helix</keyword>
<keyword id="KW-0813">Transport</keyword>
<evidence type="ECO:0000255" key="1">
    <source>
        <dbReference type="HAMAP-Rule" id="MF_01335"/>
    </source>
</evidence>
<evidence type="ECO:0007829" key="2">
    <source>
        <dbReference type="PDB" id="3AZC"/>
    </source>
</evidence>
<dbReference type="EC" id="7.1.1.6" evidence="1"/>
<dbReference type="EMBL" id="BA000039">
    <property type="protein sequence ID" value="BAC08511.1"/>
    <property type="molecule type" value="Genomic_DNA"/>
</dbReference>
<dbReference type="RefSeq" id="NP_681749.1">
    <property type="nucleotide sequence ID" value="NC_004113.1"/>
</dbReference>
<dbReference type="RefSeq" id="WP_011056803.1">
    <property type="nucleotide sequence ID" value="NC_004113.1"/>
</dbReference>
<dbReference type="PDB" id="3AZC">
    <property type="method" value="X-ray"/>
    <property type="resolution" value="2.00 A"/>
    <property type="chains" value="A=54-180"/>
</dbReference>
<dbReference type="PDBsum" id="3AZC"/>
<dbReference type="SMR" id="P0C8N8"/>
<dbReference type="STRING" id="197221.gene:10747551"/>
<dbReference type="EnsemblBacteria" id="BAC08511">
    <property type="protein sequence ID" value="BAC08511"/>
    <property type="gene ID" value="BAC08511"/>
</dbReference>
<dbReference type="KEGG" id="tel:tlr0959"/>
<dbReference type="PATRIC" id="fig|197221.4.peg.1006"/>
<dbReference type="eggNOG" id="COG0723">
    <property type="taxonomic scope" value="Bacteria"/>
</dbReference>
<dbReference type="EvolutionaryTrace" id="P0C8N8"/>
<dbReference type="Proteomes" id="UP000000440">
    <property type="component" value="Chromosome"/>
</dbReference>
<dbReference type="GO" id="GO:0031676">
    <property type="term" value="C:plasma membrane-derived thylakoid membrane"/>
    <property type="evidence" value="ECO:0007669"/>
    <property type="project" value="UniProtKB-SubCell"/>
</dbReference>
<dbReference type="GO" id="GO:0051537">
    <property type="term" value="F:2 iron, 2 sulfur cluster binding"/>
    <property type="evidence" value="ECO:0007669"/>
    <property type="project" value="UniProtKB-KW"/>
</dbReference>
<dbReference type="GO" id="GO:0045158">
    <property type="term" value="F:electron transporter, transferring electrons within cytochrome b6/f complex of photosystem II activity"/>
    <property type="evidence" value="ECO:0007669"/>
    <property type="project" value="UniProtKB-UniRule"/>
</dbReference>
<dbReference type="GO" id="GO:0046872">
    <property type="term" value="F:metal ion binding"/>
    <property type="evidence" value="ECO:0007669"/>
    <property type="project" value="UniProtKB-KW"/>
</dbReference>
<dbReference type="GO" id="GO:0004497">
    <property type="term" value="F:monooxygenase activity"/>
    <property type="evidence" value="ECO:0007669"/>
    <property type="project" value="UniProtKB-ARBA"/>
</dbReference>
<dbReference type="GO" id="GO:0016705">
    <property type="term" value="F:oxidoreductase activity, acting on paired donors, with incorporation or reduction of molecular oxygen"/>
    <property type="evidence" value="ECO:0007669"/>
    <property type="project" value="UniProtKB-ARBA"/>
</dbReference>
<dbReference type="GO" id="GO:0009496">
    <property type="term" value="F:plastoquinol--plastocyanin reductase activity"/>
    <property type="evidence" value="ECO:0007669"/>
    <property type="project" value="UniProtKB-UniRule"/>
</dbReference>
<dbReference type="GO" id="GO:0015979">
    <property type="term" value="P:photosynthesis"/>
    <property type="evidence" value="ECO:0007669"/>
    <property type="project" value="UniProtKB-UniRule"/>
</dbReference>
<dbReference type="CDD" id="cd03471">
    <property type="entry name" value="Rieske_cytochrome_b6f"/>
    <property type="match status" value="1"/>
</dbReference>
<dbReference type="FunFam" id="2.102.10.10:FF:000007">
    <property type="entry name" value="Cytochrome b6-f complex iron-sulfur subunit"/>
    <property type="match status" value="1"/>
</dbReference>
<dbReference type="Gene3D" id="2.102.10.10">
    <property type="entry name" value="Rieske [2Fe-2S] iron-sulphur domain"/>
    <property type="match status" value="1"/>
</dbReference>
<dbReference type="Gene3D" id="1.20.5.700">
    <property type="entry name" value="Single helix bin"/>
    <property type="match status" value="1"/>
</dbReference>
<dbReference type="HAMAP" id="MF_01335">
    <property type="entry name" value="Cytb6_f_Rieske"/>
    <property type="match status" value="1"/>
</dbReference>
<dbReference type="InterPro" id="IPR023960">
    <property type="entry name" value="Cyt_b6_f_Rieske"/>
</dbReference>
<dbReference type="InterPro" id="IPR017941">
    <property type="entry name" value="Rieske_2Fe-2S"/>
</dbReference>
<dbReference type="InterPro" id="IPR036922">
    <property type="entry name" value="Rieske_2Fe-2S_sf"/>
</dbReference>
<dbReference type="InterPro" id="IPR014349">
    <property type="entry name" value="Rieske_Fe-S_prot"/>
</dbReference>
<dbReference type="InterPro" id="IPR005805">
    <property type="entry name" value="Rieske_Fe-S_prot_C"/>
</dbReference>
<dbReference type="NCBIfam" id="NF045928">
    <property type="entry name" value="Cytb6fFeSPetC"/>
    <property type="match status" value="1"/>
</dbReference>
<dbReference type="NCBIfam" id="NF010001">
    <property type="entry name" value="PRK13474.1"/>
    <property type="match status" value="1"/>
</dbReference>
<dbReference type="PANTHER" id="PTHR10134">
    <property type="entry name" value="CYTOCHROME B-C1 COMPLEX SUBUNIT RIESKE, MITOCHONDRIAL"/>
    <property type="match status" value="1"/>
</dbReference>
<dbReference type="Pfam" id="PF00355">
    <property type="entry name" value="Rieske"/>
    <property type="match status" value="1"/>
</dbReference>
<dbReference type="Pfam" id="PF25471">
    <property type="entry name" value="TM_PetC"/>
    <property type="match status" value="1"/>
</dbReference>
<dbReference type="PRINTS" id="PR00162">
    <property type="entry name" value="RIESKE"/>
</dbReference>
<dbReference type="SUPFAM" id="SSF50022">
    <property type="entry name" value="ISP domain"/>
    <property type="match status" value="1"/>
</dbReference>
<dbReference type="PROSITE" id="PS51296">
    <property type="entry name" value="RIESKE"/>
    <property type="match status" value="1"/>
</dbReference>
<feature type="chain" id="PRO_0000361773" description="Cytochrome b6-f complex iron-sulfur subunit">
    <location>
        <begin position="1"/>
        <end position="180"/>
    </location>
</feature>
<feature type="transmembrane region" description="Helical" evidence="1">
    <location>
        <begin position="21"/>
        <end position="43"/>
    </location>
</feature>
<feature type="domain" description="Rieske" evidence="1">
    <location>
        <begin position="66"/>
        <end position="162"/>
    </location>
</feature>
<feature type="binding site" evidence="1">
    <location>
        <position position="108"/>
    </location>
    <ligand>
        <name>[2Fe-2S] cluster</name>
        <dbReference type="ChEBI" id="CHEBI:190135"/>
    </ligand>
</feature>
<feature type="binding site" evidence="1">
    <location>
        <position position="110"/>
    </location>
    <ligand>
        <name>[2Fe-2S] cluster</name>
        <dbReference type="ChEBI" id="CHEBI:190135"/>
    </ligand>
</feature>
<feature type="binding site" evidence="1">
    <location>
        <position position="126"/>
    </location>
    <ligand>
        <name>[2Fe-2S] cluster</name>
        <dbReference type="ChEBI" id="CHEBI:190135"/>
    </ligand>
</feature>
<feature type="binding site" evidence="1">
    <location>
        <position position="129"/>
    </location>
    <ligand>
        <name>[2Fe-2S] cluster</name>
        <dbReference type="ChEBI" id="CHEBI:190135"/>
    </ligand>
</feature>
<feature type="disulfide bond" evidence="1">
    <location>
        <begin position="113"/>
        <end position="128"/>
    </location>
</feature>
<feature type="helix" evidence="2">
    <location>
        <begin position="66"/>
        <end position="70"/>
    </location>
</feature>
<feature type="strand" evidence="2">
    <location>
        <begin position="78"/>
        <end position="82"/>
    </location>
</feature>
<feature type="helix" evidence="2">
    <location>
        <begin position="84"/>
        <end position="86"/>
    </location>
</feature>
<feature type="strand" evidence="2">
    <location>
        <begin position="88"/>
        <end position="93"/>
    </location>
</feature>
<feature type="strand" evidence="2">
    <location>
        <begin position="97"/>
        <end position="99"/>
    </location>
</feature>
<feature type="strand" evidence="2">
    <location>
        <begin position="101"/>
        <end position="105"/>
    </location>
</feature>
<feature type="turn" evidence="2">
    <location>
        <begin position="109"/>
        <end position="111"/>
    </location>
</feature>
<feature type="turn" evidence="2">
    <location>
        <begin position="119"/>
        <end position="122"/>
    </location>
</feature>
<feature type="strand" evidence="2">
    <location>
        <begin position="123"/>
        <end position="125"/>
    </location>
</feature>
<feature type="turn" evidence="2">
    <location>
        <begin position="127"/>
        <end position="129"/>
    </location>
</feature>
<feature type="strand" evidence="2">
    <location>
        <begin position="139"/>
        <end position="143"/>
    </location>
</feature>
<feature type="strand" evidence="2">
    <location>
        <begin position="150"/>
        <end position="155"/>
    </location>
</feature>
<feature type="strand" evidence="2">
    <location>
        <begin position="161"/>
        <end position="165"/>
    </location>
</feature>
<feature type="turn" evidence="2">
    <location>
        <begin position="171"/>
        <end position="173"/>
    </location>
</feature>
<comment type="function">
    <text evidence="1">Component of the cytochrome b6-f complex, which mediates electron transfer between photosystem II (PSII) and photosystem I (PSI), cyclic electron flow around PSI, and state transitions.</text>
</comment>
<comment type="catalytic activity">
    <reaction evidence="1">
        <text>2 oxidized [plastocyanin] + a plastoquinol + 2 H(+)(in) = 2 reduced [plastocyanin] + a plastoquinone + 4 H(+)(out)</text>
        <dbReference type="Rhea" id="RHEA:22148"/>
        <dbReference type="Rhea" id="RHEA-COMP:9561"/>
        <dbReference type="Rhea" id="RHEA-COMP:9562"/>
        <dbReference type="Rhea" id="RHEA-COMP:10039"/>
        <dbReference type="Rhea" id="RHEA-COMP:10040"/>
        <dbReference type="ChEBI" id="CHEBI:15378"/>
        <dbReference type="ChEBI" id="CHEBI:17757"/>
        <dbReference type="ChEBI" id="CHEBI:29036"/>
        <dbReference type="ChEBI" id="CHEBI:49552"/>
        <dbReference type="ChEBI" id="CHEBI:62192"/>
        <dbReference type="EC" id="7.1.1.6"/>
    </reaction>
</comment>
<comment type="cofactor">
    <cofactor evidence="1">
        <name>[2Fe-2S] cluster</name>
        <dbReference type="ChEBI" id="CHEBI:190135"/>
    </cofactor>
    <text evidence="1">Binds 1 [2Fe-2S] cluster per subunit.</text>
</comment>
<comment type="subunit">
    <text evidence="1">The 4 large subunits of the cytochrome b6-f complex are cytochrome b6, subunit IV (17 kDa polypeptide, PetD), cytochrome f and the Rieske protein, while the 4 small subunits are PetG, PetL, PetM and PetN. The complex functions as a dimer.</text>
</comment>
<comment type="subcellular location">
    <subcellularLocation>
        <location evidence="1">Cellular thylakoid membrane</location>
        <topology evidence="1">Single-pass membrane protein</topology>
    </subcellularLocation>
    <text evidence="1">The transmembrane helix obliquely spans the membrane in one monomer, and its extrinsic C-terminal domain is part of the other monomer.</text>
</comment>
<comment type="miscellaneous">
    <text>The Rieske iron-sulfur protein is a high potential 2Fe-2S protein.</text>
</comment>
<comment type="similarity">
    <text evidence="1">Belongs to the Rieske iron-sulfur protein family.</text>
</comment>
<gene>
    <name evidence="1" type="primary">petC</name>
    <name type="ordered locus">tlr0959</name>
</gene>